<keyword id="KW-0007">Acetylation</keyword>
<keyword id="KW-1185">Reference proteome</keyword>
<keyword id="KW-0687">Ribonucleoprotein</keyword>
<keyword id="KW-0689">Ribosomal protein</keyword>
<keyword id="KW-0694">RNA-binding</keyword>
<keyword id="KW-0699">rRNA-binding</keyword>
<keyword id="KW-0820">tRNA-binding</keyword>
<evidence type="ECO:0000255" key="1">
    <source>
        <dbReference type="HAMAP-Rule" id="MF_01333"/>
    </source>
</evidence>
<evidence type="ECO:0000305" key="2"/>
<protein>
    <recommendedName>
        <fullName evidence="1">Large ribosomal subunit protein uL5</fullName>
    </recommendedName>
    <alternativeName>
        <fullName evidence="2">50S ribosomal protein L5</fullName>
    </alternativeName>
</protein>
<accession>B2U2S6</accession>
<sequence length="179" mass="20302">MAKLHDYYKDEVVKKLMTEFNYNSVMQVPRVEKITLNMGVGEAIADKKLLDNAAADLAAISGQKPLITKARKSVAGFKIRQGYPIGCKVTLRGERMWEFFERLITIAVPRIRDFRGLSAKSFDGRGNYSMGVREQIIFPEIDYDKVDRVRGLDITITTTAKSDEEGRALLAAFDFPFRK</sequence>
<comment type="function">
    <text evidence="1">This is one of the proteins that bind and probably mediate the attachment of the 5S RNA into the large ribosomal subunit, where it forms part of the central protuberance. In the 70S ribosome it contacts protein S13 of the 30S subunit (bridge B1b), connecting the 2 subunits; this bridge is implicated in subunit movement. Contacts the P site tRNA; the 5S rRNA and some of its associated proteins might help stabilize positioning of ribosome-bound tRNAs.</text>
</comment>
<comment type="subunit">
    <text evidence="1">Part of the 50S ribosomal subunit; part of the 5S rRNA/L5/L18/L25 subcomplex. Contacts the 5S rRNA and the P site tRNA. Forms a bridge to the 30S subunit in the 70S ribosome.</text>
</comment>
<comment type="similarity">
    <text evidence="1">Belongs to the universal ribosomal protein uL5 family.</text>
</comment>
<proteinExistence type="inferred from homology"/>
<name>RL5_SHIB3</name>
<feature type="chain" id="PRO_1000142452" description="Large ribosomal subunit protein uL5">
    <location>
        <begin position="1"/>
        <end position="179"/>
    </location>
</feature>
<feature type="modified residue" description="N6-acetyllysine" evidence="1">
    <location>
        <position position="3"/>
    </location>
</feature>
<gene>
    <name evidence="1" type="primary">rplE</name>
    <name type="ordered locus">SbBS512_E3693</name>
</gene>
<reference key="1">
    <citation type="submission" date="2008-05" db="EMBL/GenBank/DDBJ databases">
        <title>Complete sequence of Shigella boydii serotype 18 strain BS512.</title>
        <authorList>
            <person name="Rasko D.A."/>
            <person name="Rosovitz M."/>
            <person name="Maurelli A.T."/>
            <person name="Myers G."/>
            <person name="Seshadri R."/>
            <person name="Cer R."/>
            <person name="Jiang L."/>
            <person name="Ravel J."/>
            <person name="Sebastian Y."/>
        </authorList>
    </citation>
    <scope>NUCLEOTIDE SEQUENCE [LARGE SCALE GENOMIC DNA]</scope>
    <source>
        <strain>CDC 3083-94 / BS512</strain>
    </source>
</reference>
<dbReference type="EMBL" id="CP001063">
    <property type="protein sequence ID" value="ACD09627.1"/>
    <property type="molecule type" value="Genomic_DNA"/>
</dbReference>
<dbReference type="RefSeq" id="WP_001096200.1">
    <property type="nucleotide sequence ID" value="NC_010658.1"/>
</dbReference>
<dbReference type="SMR" id="B2U2S6"/>
<dbReference type="STRING" id="344609.SbBS512_E3693"/>
<dbReference type="GeneID" id="93778679"/>
<dbReference type="KEGG" id="sbc:SbBS512_E3693"/>
<dbReference type="HOGENOM" id="CLU_061015_2_1_6"/>
<dbReference type="Proteomes" id="UP000001030">
    <property type="component" value="Chromosome"/>
</dbReference>
<dbReference type="GO" id="GO:1990904">
    <property type="term" value="C:ribonucleoprotein complex"/>
    <property type="evidence" value="ECO:0007669"/>
    <property type="project" value="UniProtKB-KW"/>
</dbReference>
<dbReference type="GO" id="GO:0005840">
    <property type="term" value="C:ribosome"/>
    <property type="evidence" value="ECO:0007669"/>
    <property type="project" value="UniProtKB-KW"/>
</dbReference>
<dbReference type="GO" id="GO:0019843">
    <property type="term" value="F:rRNA binding"/>
    <property type="evidence" value="ECO:0007669"/>
    <property type="project" value="UniProtKB-UniRule"/>
</dbReference>
<dbReference type="GO" id="GO:0003735">
    <property type="term" value="F:structural constituent of ribosome"/>
    <property type="evidence" value="ECO:0007669"/>
    <property type="project" value="InterPro"/>
</dbReference>
<dbReference type="GO" id="GO:0000049">
    <property type="term" value="F:tRNA binding"/>
    <property type="evidence" value="ECO:0007669"/>
    <property type="project" value="UniProtKB-UniRule"/>
</dbReference>
<dbReference type="GO" id="GO:0006412">
    <property type="term" value="P:translation"/>
    <property type="evidence" value="ECO:0007669"/>
    <property type="project" value="UniProtKB-UniRule"/>
</dbReference>
<dbReference type="FunFam" id="3.30.1440.10:FF:000001">
    <property type="entry name" value="50S ribosomal protein L5"/>
    <property type="match status" value="1"/>
</dbReference>
<dbReference type="Gene3D" id="3.30.1440.10">
    <property type="match status" value="1"/>
</dbReference>
<dbReference type="HAMAP" id="MF_01333_B">
    <property type="entry name" value="Ribosomal_uL5_B"/>
    <property type="match status" value="1"/>
</dbReference>
<dbReference type="InterPro" id="IPR002132">
    <property type="entry name" value="Ribosomal_uL5"/>
</dbReference>
<dbReference type="InterPro" id="IPR020930">
    <property type="entry name" value="Ribosomal_uL5_bac-type"/>
</dbReference>
<dbReference type="InterPro" id="IPR031309">
    <property type="entry name" value="Ribosomal_uL5_C"/>
</dbReference>
<dbReference type="InterPro" id="IPR020929">
    <property type="entry name" value="Ribosomal_uL5_CS"/>
</dbReference>
<dbReference type="InterPro" id="IPR022803">
    <property type="entry name" value="Ribosomal_uL5_dom_sf"/>
</dbReference>
<dbReference type="InterPro" id="IPR031310">
    <property type="entry name" value="Ribosomal_uL5_N"/>
</dbReference>
<dbReference type="NCBIfam" id="NF000585">
    <property type="entry name" value="PRK00010.1"/>
    <property type="match status" value="1"/>
</dbReference>
<dbReference type="PANTHER" id="PTHR11994">
    <property type="entry name" value="60S RIBOSOMAL PROTEIN L11-RELATED"/>
    <property type="match status" value="1"/>
</dbReference>
<dbReference type="Pfam" id="PF00281">
    <property type="entry name" value="Ribosomal_L5"/>
    <property type="match status" value="1"/>
</dbReference>
<dbReference type="Pfam" id="PF00673">
    <property type="entry name" value="Ribosomal_L5_C"/>
    <property type="match status" value="1"/>
</dbReference>
<dbReference type="PIRSF" id="PIRSF002161">
    <property type="entry name" value="Ribosomal_L5"/>
    <property type="match status" value="1"/>
</dbReference>
<dbReference type="SUPFAM" id="SSF55282">
    <property type="entry name" value="RL5-like"/>
    <property type="match status" value="1"/>
</dbReference>
<dbReference type="PROSITE" id="PS00358">
    <property type="entry name" value="RIBOSOMAL_L5"/>
    <property type="match status" value="1"/>
</dbReference>
<organism>
    <name type="scientific">Shigella boydii serotype 18 (strain CDC 3083-94 / BS512)</name>
    <dbReference type="NCBI Taxonomy" id="344609"/>
    <lineage>
        <taxon>Bacteria</taxon>
        <taxon>Pseudomonadati</taxon>
        <taxon>Pseudomonadota</taxon>
        <taxon>Gammaproteobacteria</taxon>
        <taxon>Enterobacterales</taxon>
        <taxon>Enterobacteriaceae</taxon>
        <taxon>Shigella</taxon>
    </lineage>
</organism>